<dbReference type="EC" id="5.3.1.24" evidence="1"/>
<dbReference type="EMBL" id="CP000485">
    <property type="protein sequence ID" value="ABK84456.1"/>
    <property type="molecule type" value="Genomic_DNA"/>
</dbReference>
<dbReference type="RefSeq" id="WP_000865106.1">
    <property type="nucleotide sequence ID" value="NC_008600.1"/>
</dbReference>
<dbReference type="SMR" id="A0RB63"/>
<dbReference type="KEGG" id="btl:BALH_1099"/>
<dbReference type="HOGENOM" id="CLU_076364_1_0_9"/>
<dbReference type="UniPathway" id="UPA00035">
    <property type="reaction ID" value="UER00042"/>
</dbReference>
<dbReference type="GO" id="GO:0004640">
    <property type="term" value="F:phosphoribosylanthranilate isomerase activity"/>
    <property type="evidence" value="ECO:0007669"/>
    <property type="project" value="UniProtKB-UniRule"/>
</dbReference>
<dbReference type="GO" id="GO:0000162">
    <property type="term" value="P:L-tryptophan biosynthetic process"/>
    <property type="evidence" value="ECO:0007669"/>
    <property type="project" value="UniProtKB-UniRule"/>
</dbReference>
<dbReference type="CDD" id="cd00405">
    <property type="entry name" value="PRAI"/>
    <property type="match status" value="1"/>
</dbReference>
<dbReference type="FunFam" id="3.20.20.70:FF:000075">
    <property type="entry name" value="Tryptophan biosynthesis protein TRP1"/>
    <property type="match status" value="1"/>
</dbReference>
<dbReference type="Gene3D" id="3.20.20.70">
    <property type="entry name" value="Aldolase class I"/>
    <property type="match status" value="1"/>
</dbReference>
<dbReference type="HAMAP" id="MF_00135">
    <property type="entry name" value="PRAI"/>
    <property type="match status" value="1"/>
</dbReference>
<dbReference type="InterPro" id="IPR013785">
    <property type="entry name" value="Aldolase_TIM"/>
</dbReference>
<dbReference type="InterPro" id="IPR001240">
    <property type="entry name" value="PRAI_dom"/>
</dbReference>
<dbReference type="InterPro" id="IPR011060">
    <property type="entry name" value="RibuloseP-bd_barrel"/>
</dbReference>
<dbReference type="InterPro" id="IPR044643">
    <property type="entry name" value="TrpF_fam"/>
</dbReference>
<dbReference type="NCBIfam" id="NF002297">
    <property type="entry name" value="PRK01222.1-3"/>
    <property type="match status" value="1"/>
</dbReference>
<dbReference type="PANTHER" id="PTHR42894">
    <property type="entry name" value="N-(5'-PHOSPHORIBOSYL)ANTHRANILATE ISOMERASE"/>
    <property type="match status" value="1"/>
</dbReference>
<dbReference type="PANTHER" id="PTHR42894:SF1">
    <property type="entry name" value="N-(5'-PHOSPHORIBOSYL)ANTHRANILATE ISOMERASE"/>
    <property type="match status" value="1"/>
</dbReference>
<dbReference type="Pfam" id="PF00697">
    <property type="entry name" value="PRAI"/>
    <property type="match status" value="1"/>
</dbReference>
<dbReference type="SUPFAM" id="SSF51366">
    <property type="entry name" value="Ribulose-phoshate binding barrel"/>
    <property type="match status" value="1"/>
</dbReference>
<gene>
    <name evidence="1" type="primary">trpF</name>
    <name type="ordered locus">BALH_1099</name>
</gene>
<feature type="chain" id="PRO_1000018578" description="N-(5'-phosphoribosyl)anthranilate isomerase">
    <location>
        <begin position="1"/>
        <end position="204"/>
    </location>
</feature>
<keyword id="KW-0028">Amino-acid biosynthesis</keyword>
<keyword id="KW-0057">Aromatic amino acid biosynthesis</keyword>
<keyword id="KW-0413">Isomerase</keyword>
<keyword id="KW-0822">Tryptophan biosynthesis</keyword>
<comment type="catalytic activity">
    <reaction evidence="1">
        <text>N-(5-phospho-beta-D-ribosyl)anthranilate = 1-(2-carboxyphenylamino)-1-deoxy-D-ribulose 5-phosphate</text>
        <dbReference type="Rhea" id="RHEA:21540"/>
        <dbReference type="ChEBI" id="CHEBI:18277"/>
        <dbReference type="ChEBI" id="CHEBI:58613"/>
        <dbReference type="EC" id="5.3.1.24"/>
    </reaction>
</comment>
<comment type="pathway">
    <text evidence="1">Amino-acid biosynthesis; L-tryptophan biosynthesis; L-tryptophan from chorismate: step 3/5.</text>
</comment>
<comment type="similarity">
    <text evidence="1">Belongs to the TrpF family.</text>
</comment>
<protein>
    <recommendedName>
        <fullName evidence="1">N-(5'-phosphoribosyl)anthranilate isomerase</fullName>
        <shortName evidence="1">PRAI</shortName>
        <ecNumber evidence="1">5.3.1.24</ecNumber>
    </recommendedName>
</protein>
<sequence length="204" mass="22691">MKVKICGITDMETAKRACEYGADALGFVFAESKRKITPGLAKEIIQELPANVLKIGVFVNESVEVIQKITENCGLTHVQLHGGEDNHQIRRLNIPSIKSLGVTSESDMKNAQGYETDYILFDSPKEKFHGGNGKTFPWELLAHMPKELREKTILAGGLNTLNIEEAIRTVRPYMVDVSSGVETEGKKDVEKIKQFIIKAKECSK</sequence>
<accession>A0RB63</accession>
<evidence type="ECO:0000255" key="1">
    <source>
        <dbReference type="HAMAP-Rule" id="MF_00135"/>
    </source>
</evidence>
<name>TRPF_BACAH</name>
<organism>
    <name type="scientific">Bacillus thuringiensis (strain Al Hakam)</name>
    <dbReference type="NCBI Taxonomy" id="412694"/>
    <lineage>
        <taxon>Bacteria</taxon>
        <taxon>Bacillati</taxon>
        <taxon>Bacillota</taxon>
        <taxon>Bacilli</taxon>
        <taxon>Bacillales</taxon>
        <taxon>Bacillaceae</taxon>
        <taxon>Bacillus</taxon>
        <taxon>Bacillus cereus group</taxon>
    </lineage>
</organism>
<proteinExistence type="inferred from homology"/>
<reference key="1">
    <citation type="journal article" date="2007" name="J. Bacteriol.">
        <title>The complete genome sequence of Bacillus thuringiensis Al Hakam.</title>
        <authorList>
            <person name="Challacombe J.F."/>
            <person name="Altherr M.R."/>
            <person name="Xie G."/>
            <person name="Bhotika S.S."/>
            <person name="Brown N."/>
            <person name="Bruce D."/>
            <person name="Campbell C.S."/>
            <person name="Campbell M.L."/>
            <person name="Chen J."/>
            <person name="Chertkov O."/>
            <person name="Cleland C."/>
            <person name="Dimitrijevic M."/>
            <person name="Doggett N.A."/>
            <person name="Fawcett J.J."/>
            <person name="Glavina T."/>
            <person name="Goodwin L.A."/>
            <person name="Green L.D."/>
            <person name="Han C.S."/>
            <person name="Hill K.K."/>
            <person name="Hitchcock P."/>
            <person name="Jackson P.J."/>
            <person name="Keim P."/>
            <person name="Kewalramani A.R."/>
            <person name="Longmire J."/>
            <person name="Lucas S."/>
            <person name="Malfatti S."/>
            <person name="Martinez D."/>
            <person name="McMurry K."/>
            <person name="Meincke L.J."/>
            <person name="Misra M."/>
            <person name="Moseman B.L."/>
            <person name="Mundt M."/>
            <person name="Munk A.C."/>
            <person name="Okinaka R.T."/>
            <person name="Parson-Quintana B."/>
            <person name="Reilly L.P."/>
            <person name="Richardson P."/>
            <person name="Robinson D.L."/>
            <person name="Saunders E."/>
            <person name="Tapia R."/>
            <person name="Tesmer J.G."/>
            <person name="Thayer N."/>
            <person name="Thompson L.S."/>
            <person name="Tice H."/>
            <person name="Ticknor L.O."/>
            <person name="Wills P.L."/>
            <person name="Gilna P."/>
            <person name="Brettin T.S."/>
        </authorList>
    </citation>
    <scope>NUCLEOTIDE SEQUENCE [LARGE SCALE GENOMIC DNA]</scope>
    <source>
        <strain>Al Hakam</strain>
    </source>
</reference>